<feature type="initiator methionine" description="Removed" evidence="2">
    <location>
        <position position="1"/>
    </location>
</feature>
<feature type="chain" id="PRO_0000100221" description="Y-box-binding protein 1">
    <location>
        <begin position="2"/>
        <end position="322"/>
    </location>
</feature>
<feature type="domain" description="CSD">
    <location>
        <begin position="59"/>
        <end position="123"/>
    </location>
</feature>
<feature type="region of interest" description="Disordered" evidence="4">
    <location>
        <begin position="1"/>
        <end position="47"/>
    </location>
</feature>
<feature type="region of interest" description="Interaction with ss-DNA" evidence="2">
    <location>
        <begin position="14"/>
        <end position="69"/>
    </location>
</feature>
<feature type="region of interest" description="C5-methylcytosine binding" evidence="2">
    <location>
        <begin position="63"/>
        <end position="68"/>
    </location>
</feature>
<feature type="region of interest" description="Disordered" evidence="4">
    <location>
        <begin position="118"/>
        <end position="322"/>
    </location>
</feature>
<feature type="compositionally biased region" description="Low complexity" evidence="4">
    <location>
        <begin position="14"/>
        <end position="27"/>
    </location>
</feature>
<feature type="compositionally biased region" description="Gly residues" evidence="4">
    <location>
        <begin position="28"/>
        <end position="39"/>
    </location>
</feature>
<feature type="compositionally biased region" description="Basic residues" evidence="4">
    <location>
        <begin position="142"/>
        <end position="152"/>
    </location>
</feature>
<feature type="compositionally biased region" description="Low complexity" evidence="4">
    <location>
        <begin position="153"/>
        <end position="164"/>
    </location>
</feature>
<feature type="compositionally biased region" description="Low complexity" evidence="4">
    <location>
        <begin position="192"/>
        <end position="206"/>
    </location>
</feature>
<feature type="compositionally biased region" description="Basic residues" evidence="4">
    <location>
        <begin position="239"/>
        <end position="248"/>
    </location>
</feature>
<feature type="compositionally biased region" description="Basic residues" evidence="4">
    <location>
        <begin position="277"/>
        <end position="289"/>
    </location>
</feature>
<feature type="compositionally biased region" description="Basic and acidic residues" evidence="4">
    <location>
        <begin position="290"/>
        <end position="303"/>
    </location>
</feature>
<feature type="site" description="Important for C5-methylcytosine-recognition" evidence="2">
    <location>
        <position position="63"/>
    </location>
</feature>
<feature type="site" description="Cleavage; by 20S proteasomal protease" evidence="3">
    <location>
        <begin position="217"/>
        <end position="218"/>
    </location>
</feature>
<feature type="modified residue" description="N-acetylserine" evidence="2">
    <location>
        <position position="2"/>
    </location>
</feature>
<feature type="modified residue" description="Phosphoserine; by PKB/AKT1" evidence="2">
    <location>
        <position position="100"/>
    </location>
</feature>
<feature type="modified residue" description="Phosphotyrosine" evidence="2">
    <location>
        <position position="160"/>
    </location>
</feature>
<feature type="modified residue" description="Phosphoserine" evidence="2">
    <location>
        <position position="163"/>
    </location>
</feature>
<feature type="modified residue" description="Phosphoserine" evidence="2">
    <location>
        <position position="165"/>
    </location>
</feature>
<feature type="modified residue" description="Phosphoserine" evidence="2">
    <location>
        <position position="172"/>
    </location>
</feature>
<feature type="modified residue" description="Phosphoserine" evidence="2">
    <location>
        <position position="174"/>
    </location>
</feature>
<feature type="modified residue" description="N6-acetyllysine" evidence="2">
    <location>
        <position position="299"/>
    </location>
</feature>
<feature type="modified residue" description="N6-acetyllysine" evidence="2">
    <location>
        <position position="302"/>
    </location>
</feature>
<feature type="modified residue" description="Phosphoserine" evidence="2">
    <location>
        <position position="312"/>
    </location>
</feature>
<feature type="cross-link" description="Glycyl lysine isopeptide (Lys-Gly) (interchain with G-Cter in SUMO2)" evidence="2">
    <location>
        <position position="24"/>
    </location>
</feature>
<feature type="cross-link" description="Glycyl lysine isopeptide (Lys-Gly) (interchain with G-Cter in ubiquitin)" evidence="2">
    <location>
        <position position="135"/>
    </location>
</feature>
<feature type="sequence conflict" description="In Ref. 2; AAA40906." evidence="6" ref="2">
    <original>A</original>
    <variation>P</variation>
    <location>
        <position position="5"/>
    </location>
</feature>
<feature type="sequence conflict" description="In Ref. 1; AAA41108." evidence="6" ref="1">
    <original>P</original>
    <variation>S</variation>
    <location>
        <position position="306"/>
    </location>
</feature>
<accession>P62961</accession>
<accession>P22568</accession>
<accession>P27817</accession>
<accession>P43482</accession>
<accession>Q4KMA4</accession>
<name>YBOX1_RAT</name>
<keyword id="KW-0007">Acetylation</keyword>
<keyword id="KW-0010">Activator</keyword>
<keyword id="KW-0963">Cytoplasm</keyword>
<keyword id="KW-0238">DNA-binding</keyword>
<keyword id="KW-1017">Isopeptide bond</keyword>
<keyword id="KW-0497">Mitogen</keyword>
<keyword id="KW-0507">mRNA processing</keyword>
<keyword id="KW-0508">mRNA splicing</keyword>
<keyword id="KW-0539">Nucleus</keyword>
<keyword id="KW-0597">Phosphoprotein</keyword>
<keyword id="KW-1185">Reference proteome</keyword>
<keyword id="KW-0678">Repressor</keyword>
<keyword id="KW-0694">RNA-binding</keyword>
<keyword id="KW-0964">Secreted</keyword>
<keyword id="KW-0804">Transcription</keyword>
<keyword id="KW-0805">Transcription regulation</keyword>
<keyword id="KW-0832">Ubl conjugation</keyword>
<dbReference type="EMBL" id="M57299">
    <property type="protein sequence ID" value="AAA41108.1"/>
    <property type="molecule type" value="mRNA"/>
</dbReference>
<dbReference type="EMBL" id="M69138">
    <property type="protein sequence ID" value="AAA40906.1"/>
    <property type="molecule type" value="mRNA"/>
</dbReference>
<dbReference type="EMBL" id="D13309">
    <property type="protein sequence ID" value="BAA02569.1"/>
    <property type="molecule type" value="mRNA"/>
</dbReference>
<dbReference type="EMBL" id="BC072486">
    <property type="protein sequence ID" value="AAH72486.1"/>
    <property type="molecule type" value="mRNA"/>
</dbReference>
<dbReference type="EMBL" id="BC098672">
    <property type="protein sequence ID" value="AAH98672.1"/>
    <property type="molecule type" value="mRNA"/>
</dbReference>
<dbReference type="PIR" id="A23677">
    <property type="entry name" value="A23677"/>
</dbReference>
<dbReference type="RefSeq" id="NP_113751.3">
    <property type="nucleotide sequence ID" value="NM_031563.3"/>
</dbReference>
<dbReference type="BMRB" id="P62961"/>
<dbReference type="SMR" id="P62961"/>
<dbReference type="BioGRID" id="271846">
    <property type="interactions" value="7"/>
</dbReference>
<dbReference type="FunCoup" id="P62961">
    <property type="interactions" value="1871"/>
</dbReference>
<dbReference type="IntAct" id="P62961">
    <property type="interactions" value="9"/>
</dbReference>
<dbReference type="MINT" id="P62961"/>
<dbReference type="STRING" id="10116.ENSRNOP00000015875"/>
<dbReference type="iPTMnet" id="P62961"/>
<dbReference type="PhosphoSitePlus" id="P62961"/>
<dbReference type="jPOST" id="P62961"/>
<dbReference type="PaxDb" id="10116-ENSRNOP00000055494"/>
<dbReference type="GeneID" id="500538"/>
<dbReference type="KEGG" id="rno:500538"/>
<dbReference type="UCSC" id="RGD:61843">
    <property type="organism name" value="rat"/>
</dbReference>
<dbReference type="AGR" id="RGD:61843"/>
<dbReference type="CTD" id="4904"/>
<dbReference type="RGD" id="61843">
    <property type="gene designation" value="Ybx1"/>
</dbReference>
<dbReference type="eggNOG" id="KOG3070">
    <property type="taxonomic scope" value="Eukaryota"/>
</dbReference>
<dbReference type="InParanoid" id="P62961"/>
<dbReference type="PhylomeDB" id="P62961"/>
<dbReference type="Reactome" id="R-RNO-72163">
    <property type="pathway name" value="mRNA Splicing - Major Pathway"/>
</dbReference>
<dbReference type="Reactome" id="R-RNO-72165">
    <property type="pathway name" value="mRNA Splicing - Minor Pathway"/>
</dbReference>
<dbReference type="Reactome" id="R-RNO-72203">
    <property type="pathway name" value="Processing of Capped Intron-Containing Pre-mRNA"/>
</dbReference>
<dbReference type="Reactome" id="R-RNO-877300">
    <property type="pathway name" value="Interferon gamma signaling"/>
</dbReference>
<dbReference type="Reactome" id="R-RNO-9017802">
    <property type="pathway name" value="Noncanonical activation of NOTCH3"/>
</dbReference>
<dbReference type="PRO" id="PR:P62961"/>
<dbReference type="Proteomes" id="UP000002494">
    <property type="component" value="Unplaced"/>
</dbReference>
<dbReference type="GO" id="GO:0070937">
    <property type="term" value="C:CRD-mediated mRNA stability complex"/>
    <property type="evidence" value="ECO:0000266"/>
    <property type="project" value="RGD"/>
</dbReference>
<dbReference type="GO" id="GO:0005737">
    <property type="term" value="C:cytoplasm"/>
    <property type="evidence" value="ECO:0000266"/>
    <property type="project" value="RGD"/>
</dbReference>
<dbReference type="GO" id="GO:0010494">
    <property type="term" value="C:cytoplasmic stress granule"/>
    <property type="evidence" value="ECO:0000250"/>
    <property type="project" value="UniProtKB"/>
</dbReference>
<dbReference type="GO" id="GO:0030425">
    <property type="term" value="C:dendrite"/>
    <property type="evidence" value="ECO:0000314"/>
    <property type="project" value="RGD"/>
</dbReference>
<dbReference type="GO" id="GO:0070062">
    <property type="term" value="C:extracellular exosome"/>
    <property type="evidence" value="ECO:0000250"/>
    <property type="project" value="UniProtKB"/>
</dbReference>
<dbReference type="GO" id="GO:0071204">
    <property type="term" value="C:histone pre-mRNA 3'end processing complex"/>
    <property type="evidence" value="ECO:0000250"/>
    <property type="project" value="UniProtKB"/>
</dbReference>
<dbReference type="GO" id="GO:0043025">
    <property type="term" value="C:neuronal cell body"/>
    <property type="evidence" value="ECO:0000314"/>
    <property type="project" value="RGD"/>
</dbReference>
<dbReference type="GO" id="GO:0005634">
    <property type="term" value="C:nucleus"/>
    <property type="evidence" value="ECO:0000266"/>
    <property type="project" value="RGD"/>
</dbReference>
<dbReference type="GO" id="GO:0000932">
    <property type="term" value="C:P-body"/>
    <property type="evidence" value="ECO:0000266"/>
    <property type="project" value="RGD"/>
</dbReference>
<dbReference type="GO" id="GO:0048471">
    <property type="term" value="C:perinuclear region of cytoplasm"/>
    <property type="evidence" value="ECO:0000314"/>
    <property type="project" value="RGD"/>
</dbReference>
<dbReference type="GO" id="GO:0032991">
    <property type="term" value="C:protein-containing complex"/>
    <property type="evidence" value="ECO:0000314"/>
    <property type="project" value="RGD"/>
</dbReference>
<dbReference type="GO" id="GO:1990904">
    <property type="term" value="C:ribonucleoprotein complex"/>
    <property type="evidence" value="ECO:0000250"/>
    <property type="project" value="UniProtKB"/>
</dbReference>
<dbReference type="GO" id="GO:0045202">
    <property type="term" value="C:synapse"/>
    <property type="evidence" value="ECO:0000266"/>
    <property type="project" value="RGD"/>
</dbReference>
<dbReference type="GO" id="GO:0005689">
    <property type="term" value="C:U12-type spliceosomal complex"/>
    <property type="evidence" value="ECO:0000266"/>
    <property type="project" value="RGD"/>
</dbReference>
<dbReference type="GO" id="GO:0062153">
    <property type="term" value="F:C5-methylcytidine-containing RNA reader activity"/>
    <property type="evidence" value="ECO:0000250"/>
    <property type="project" value="UniProtKB"/>
</dbReference>
<dbReference type="GO" id="GO:0003682">
    <property type="term" value="F:chromatin binding"/>
    <property type="evidence" value="ECO:0000266"/>
    <property type="project" value="RGD"/>
</dbReference>
<dbReference type="GO" id="GO:0051020">
    <property type="term" value="F:GTPase binding"/>
    <property type="evidence" value="ECO:0000266"/>
    <property type="project" value="RGD"/>
</dbReference>
<dbReference type="GO" id="GO:0035198">
    <property type="term" value="F:miRNA binding"/>
    <property type="evidence" value="ECO:0000250"/>
    <property type="project" value="UniProtKB"/>
</dbReference>
<dbReference type="GO" id="GO:0003729">
    <property type="term" value="F:mRNA binding"/>
    <property type="evidence" value="ECO:0000353"/>
    <property type="project" value="RGD"/>
</dbReference>
<dbReference type="GO" id="GO:0003676">
    <property type="term" value="F:nucleic acid binding"/>
    <property type="evidence" value="ECO:0000318"/>
    <property type="project" value="GO_Central"/>
</dbReference>
<dbReference type="GO" id="GO:0002039">
    <property type="term" value="F:p53 binding"/>
    <property type="evidence" value="ECO:0000315"/>
    <property type="project" value="RGD"/>
</dbReference>
<dbReference type="GO" id="GO:0003723">
    <property type="term" value="F:RNA binding"/>
    <property type="evidence" value="ECO:0000314"/>
    <property type="project" value="RGD"/>
</dbReference>
<dbReference type="GO" id="GO:0043565">
    <property type="term" value="F:sequence-specific DNA binding"/>
    <property type="evidence" value="ECO:0000314"/>
    <property type="project" value="RGD"/>
</dbReference>
<dbReference type="GO" id="GO:1990837">
    <property type="term" value="F:sequence-specific double-stranded DNA binding"/>
    <property type="evidence" value="ECO:0000266"/>
    <property type="project" value="RGD"/>
</dbReference>
<dbReference type="GO" id="GO:0003697">
    <property type="term" value="F:single-stranded DNA binding"/>
    <property type="evidence" value="ECO:0000314"/>
    <property type="project" value="RGD"/>
</dbReference>
<dbReference type="GO" id="GO:0098761">
    <property type="term" value="P:cellular response to interleukin-7"/>
    <property type="evidence" value="ECO:0000266"/>
    <property type="project" value="RGD"/>
</dbReference>
<dbReference type="GO" id="GO:0070934">
    <property type="term" value="P:CRD-mediated mRNA stabilization"/>
    <property type="evidence" value="ECO:0000250"/>
    <property type="project" value="UniProtKB"/>
</dbReference>
<dbReference type="GO" id="GO:0048598">
    <property type="term" value="P:embryonic morphogenesis"/>
    <property type="evidence" value="ECO:0000250"/>
    <property type="project" value="UniProtKB"/>
</dbReference>
<dbReference type="GO" id="GO:0008544">
    <property type="term" value="P:epidermis development"/>
    <property type="evidence" value="ECO:0000250"/>
    <property type="project" value="UniProtKB"/>
</dbReference>
<dbReference type="GO" id="GO:0001701">
    <property type="term" value="P:in utero embryonic development"/>
    <property type="evidence" value="ECO:0000266"/>
    <property type="project" value="RGD"/>
</dbReference>
<dbReference type="GO" id="GO:1990428">
    <property type="term" value="P:miRNA transport"/>
    <property type="evidence" value="ECO:0000250"/>
    <property type="project" value="UniProtKB"/>
</dbReference>
<dbReference type="GO" id="GO:0006397">
    <property type="term" value="P:mRNA processing"/>
    <property type="evidence" value="ECO:0007669"/>
    <property type="project" value="UniProtKB-KW"/>
</dbReference>
<dbReference type="GO" id="GO:0048255">
    <property type="term" value="P:mRNA stabilization"/>
    <property type="evidence" value="ECO:0000250"/>
    <property type="project" value="UniProtKB"/>
</dbReference>
<dbReference type="GO" id="GO:0043066">
    <property type="term" value="P:negative regulation of apoptotic process"/>
    <property type="evidence" value="ECO:0000314"/>
    <property type="project" value="RGD"/>
</dbReference>
<dbReference type="GO" id="GO:2000773">
    <property type="term" value="P:negative regulation of cellular senescence"/>
    <property type="evidence" value="ECO:0000250"/>
    <property type="project" value="UniProtKB"/>
</dbReference>
<dbReference type="GO" id="GO:0046627">
    <property type="term" value="P:negative regulation of insulin receptor signaling pathway"/>
    <property type="evidence" value="ECO:0000315"/>
    <property type="project" value="RGD"/>
</dbReference>
<dbReference type="GO" id="GO:1900152">
    <property type="term" value="P:negative regulation of nuclear-transcribed mRNA catabolic process, deadenylation-dependent decay"/>
    <property type="evidence" value="ECO:0000266"/>
    <property type="project" value="RGD"/>
</dbReference>
<dbReference type="GO" id="GO:0051154">
    <property type="term" value="P:negative regulation of striated muscle cell differentiation"/>
    <property type="evidence" value="ECO:0000266"/>
    <property type="project" value="RGD"/>
</dbReference>
<dbReference type="GO" id="GO:0000122">
    <property type="term" value="P:negative regulation of transcription by RNA polymerase II"/>
    <property type="evidence" value="ECO:0000314"/>
    <property type="project" value="RGD"/>
</dbReference>
<dbReference type="GO" id="GO:0017148">
    <property type="term" value="P:negative regulation of translation"/>
    <property type="evidence" value="ECO:0000250"/>
    <property type="project" value="UniProtKB"/>
</dbReference>
<dbReference type="GO" id="GO:0051781">
    <property type="term" value="P:positive regulation of cell division"/>
    <property type="evidence" value="ECO:0007669"/>
    <property type="project" value="UniProtKB-KW"/>
</dbReference>
<dbReference type="GO" id="GO:0008284">
    <property type="term" value="P:positive regulation of cell population proliferation"/>
    <property type="evidence" value="ECO:0000315"/>
    <property type="project" value="RGD"/>
</dbReference>
<dbReference type="GO" id="GO:2000767">
    <property type="term" value="P:positive regulation of cytoplasmic translation"/>
    <property type="evidence" value="ECO:0000266"/>
    <property type="project" value="RGD"/>
</dbReference>
<dbReference type="GO" id="GO:0045944">
    <property type="term" value="P:positive regulation of transcription by RNA polymerase II"/>
    <property type="evidence" value="ECO:0000315"/>
    <property type="project" value="RGD"/>
</dbReference>
<dbReference type="GO" id="GO:1903608">
    <property type="term" value="P:protein localization to cytoplasmic stress granule"/>
    <property type="evidence" value="ECO:0000266"/>
    <property type="project" value="RGD"/>
</dbReference>
<dbReference type="GO" id="GO:0006355">
    <property type="term" value="P:regulation of DNA-templated transcription"/>
    <property type="evidence" value="ECO:0000266"/>
    <property type="project" value="RGD"/>
</dbReference>
<dbReference type="GO" id="GO:0010468">
    <property type="term" value="P:regulation of gene expression"/>
    <property type="evidence" value="ECO:0000318"/>
    <property type="project" value="GO_Central"/>
</dbReference>
<dbReference type="GO" id="GO:0008380">
    <property type="term" value="P:RNA splicing"/>
    <property type="evidence" value="ECO:0007669"/>
    <property type="project" value="UniProtKB-KW"/>
</dbReference>
<dbReference type="GO" id="GO:0050658">
    <property type="term" value="P:RNA transport"/>
    <property type="evidence" value="ECO:0000250"/>
    <property type="project" value="UniProtKB"/>
</dbReference>
<dbReference type="GO" id="GO:0051031">
    <property type="term" value="P:tRNA transport"/>
    <property type="evidence" value="ECO:0000250"/>
    <property type="project" value="UniProtKB"/>
</dbReference>
<dbReference type="CDD" id="cd04458">
    <property type="entry name" value="CSP_CDS"/>
    <property type="match status" value="1"/>
</dbReference>
<dbReference type="FunFam" id="2.40.50.140:FF:000054">
    <property type="entry name" value="Nuclease-sensitive element-binding protein 1"/>
    <property type="match status" value="1"/>
</dbReference>
<dbReference type="Gene3D" id="2.40.50.140">
    <property type="entry name" value="Nucleic acid-binding proteins"/>
    <property type="match status" value="1"/>
</dbReference>
<dbReference type="InterPro" id="IPR050181">
    <property type="entry name" value="Cold_shock_domain"/>
</dbReference>
<dbReference type="InterPro" id="IPR011129">
    <property type="entry name" value="CSD"/>
</dbReference>
<dbReference type="InterPro" id="IPR019844">
    <property type="entry name" value="CSD_CS"/>
</dbReference>
<dbReference type="InterPro" id="IPR002059">
    <property type="entry name" value="CSP_DNA-bd"/>
</dbReference>
<dbReference type="InterPro" id="IPR012340">
    <property type="entry name" value="NA-bd_OB-fold"/>
</dbReference>
<dbReference type="PANTHER" id="PTHR11544">
    <property type="entry name" value="COLD SHOCK DOMAIN CONTAINING PROTEINS"/>
    <property type="match status" value="1"/>
</dbReference>
<dbReference type="Pfam" id="PF00313">
    <property type="entry name" value="CSD"/>
    <property type="match status" value="1"/>
</dbReference>
<dbReference type="PRINTS" id="PR00050">
    <property type="entry name" value="COLDSHOCK"/>
</dbReference>
<dbReference type="SMART" id="SM00357">
    <property type="entry name" value="CSP"/>
    <property type="match status" value="1"/>
</dbReference>
<dbReference type="SUPFAM" id="SSF50249">
    <property type="entry name" value="Nucleic acid-binding proteins"/>
    <property type="match status" value="1"/>
</dbReference>
<dbReference type="PROSITE" id="PS00352">
    <property type="entry name" value="CSD_1"/>
    <property type="match status" value="1"/>
</dbReference>
<dbReference type="PROSITE" id="PS51857">
    <property type="entry name" value="CSD_2"/>
    <property type="match status" value="1"/>
</dbReference>
<evidence type="ECO:0000250" key="1">
    <source>
        <dbReference type="UniProtKB" id="P62960"/>
    </source>
</evidence>
<evidence type="ECO:0000250" key="2">
    <source>
        <dbReference type="UniProtKB" id="P67809"/>
    </source>
</evidence>
<evidence type="ECO:0000250" key="3">
    <source>
        <dbReference type="UniProtKB" id="Q28618"/>
    </source>
</evidence>
<evidence type="ECO:0000256" key="4">
    <source>
        <dbReference type="SAM" id="MobiDB-lite"/>
    </source>
</evidence>
<evidence type="ECO:0000303" key="5">
    <source>
    </source>
</evidence>
<evidence type="ECO:0000305" key="6"/>
<evidence type="ECO:0000312" key="7">
    <source>
        <dbReference type="RGD" id="61843"/>
    </source>
</evidence>
<sequence>MSSEAETQQPPAAPAAALSAADTKPGSTGSGAGSGGPGGLTSAAPAGGDKKVIATKVLGTVKWFNVRNGYGFINRNDTKEDVFVHQTAIKKNNPRKYLRSVGDGETVEFDVVEGEKGAEAANVTGPGGVPVQGSKYAADRNHYRRYPRRRGPPRNYQQNYQNSESGEKNEGSESAPEGQAQQRRPYRRRRFPPYYMRRPYARRPQYSNPPVQGEVMEGADNQGAGEQGRPVRQNMYRGYRPRFRRGPPRQRQPREDGNEEDKENQGDETQGQQPPQRRYRRNFNYRRRRPENPKPQDGKETKAADPPAENSSAPEAEQGGAE</sequence>
<reference key="1">
    <citation type="journal article" date="1990" name="J. Biol. Chem.">
        <title>Isolation and characterization of a cDNA clone for the CCAAT transcription factor EFIA reveals a novel structural motif.</title>
        <authorList>
            <person name="Ozer J."/>
            <person name="Faber M."/>
            <person name="Chalkley R."/>
            <person name="Sealy L."/>
        </authorList>
    </citation>
    <scope>NUCLEOTIDE SEQUENCE [MRNA]</scope>
    <source>
        <tissue>Liver</tissue>
    </source>
</reference>
<reference key="2">
    <citation type="submission" date="1991-06" db="EMBL/GenBank/DDBJ databases">
        <authorList>
            <person name="Petty K.J."/>
            <person name="Bartalena L."/>
            <person name="Nikodem V.M."/>
        </authorList>
    </citation>
    <scope>NUCLEOTIDE SEQUENCE [MRNA]</scope>
</reference>
<reference key="3">
    <citation type="submission" date="1992-10" db="EMBL/GenBank/DDBJ databases">
        <authorList>
            <person name="Ogawa H."/>
            <person name="Date T."/>
            <person name="Nishizawa M."/>
            <person name="Pitot H.C."/>
            <person name="Fujioka M."/>
        </authorList>
    </citation>
    <scope>NUCLEOTIDE SEQUENCE [MRNA]</scope>
</reference>
<reference key="4">
    <citation type="journal article" date="2004" name="Genome Res.">
        <title>The status, quality, and expansion of the NIH full-length cDNA project: the Mammalian Gene Collection (MGC).</title>
        <authorList>
            <consortium name="The MGC Project Team"/>
        </authorList>
    </citation>
    <scope>NUCLEOTIDE SEQUENCE [LARGE SCALE MRNA]</scope>
    <source>
        <tissue>Heart</tissue>
        <tissue>Lung</tissue>
    </source>
</reference>
<gene>
    <name evidence="7" type="primary">Ybx1</name>
    <name evidence="5" type="synonym">Yb1</name>
</gene>
<proteinExistence type="evidence at transcript level"/>
<protein>
    <recommendedName>
        <fullName evidence="5">Y-box-binding protein 1</fullName>
        <shortName evidence="5">YB-1</shortName>
    </recommendedName>
    <alternativeName>
        <fullName evidence="5">Enhancer factor I subunit A</fullName>
        <shortName evidence="5">EFI-A</shortName>
    </alternativeName>
    <alternativeName>
        <fullName>Nuclease-sensitive element-binding protein 1</fullName>
    </alternativeName>
    <alternativeName>
        <fullName>Y-box transcription factor</fullName>
    </alternativeName>
</protein>
<organism>
    <name type="scientific">Rattus norvegicus</name>
    <name type="common">Rat</name>
    <dbReference type="NCBI Taxonomy" id="10116"/>
    <lineage>
        <taxon>Eukaryota</taxon>
        <taxon>Metazoa</taxon>
        <taxon>Chordata</taxon>
        <taxon>Craniata</taxon>
        <taxon>Vertebrata</taxon>
        <taxon>Euteleostomi</taxon>
        <taxon>Mammalia</taxon>
        <taxon>Eutheria</taxon>
        <taxon>Euarchontoglires</taxon>
        <taxon>Glires</taxon>
        <taxon>Rodentia</taxon>
        <taxon>Myomorpha</taxon>
        <taxon>Muroidea</taxon>
        <taxon>Muridae</taxon>
        <taxon>Murinae</taxon>
        <taxon>Rattus</taxon>
    </lineage>
</organism>
<comment type="function">
    <text evidence="1 2 3">DNA- and RNA-binding protein involved in various processes, such as translational repression, RNA stabilization, mRNA splicing, DNA repair and transcription regulation. Predominantly acts as a RNA-binding protein: binds preferentially to the 5'-[CU]CUGCG-3' RNA motif and specifically recognizes mRNA transcripts modified by C5-methylcytosine (m5C). Promotes mRNA stabilization: acts by binding to m5C-containing mRNAs and recruiting the mRNA stability maintainer ELAVL1, thereby preventing mRNA decay. Component of the CRD-mediated complex that promotes MYC mRNA stability (By similarity). Contributes to the regulation of translation by modulating the interaction between the mRNA and eukaryotic initiation factors (By similarity). Plays a key role in RNA composition of extracellular exosomes by defining the sorting of small non-coding RNAs, such as tRNAs, Y RNAs, Vault RNAs and miRNAs. Probably sorts RNAs in exosomes by recognizing and binding C5-methylcytosine (m5C)-containing RNAs. Acts as a key effector of epidermal progenitors by preventing epidermal progenitor senescence: acts by regulating the translation of a senescence-associated subset of cytokine mRNAs, possibly by binding to m5C-containing mRNAs. Also involved in pre-mRNA alternative splicing regulation: binds to splice sites in pre-mRNA and regulates splice site selection. Binds to TSC22D1 transcripts, thereby inhibiting their translation and negatively regulating TGF-beta-mediated transcription of COL1A2 (By similarity). Also able to bind DNA: regulates transcription of the multidrug resistance gene MDR1 is enhanced in presence of the APEX1 acetylated form at 'Lys-6' and 'Lys-7'. Binds to promoters that contain a Y-box (5'-CTGATTGGCCAA-3'), such as MDR1 and HLA class II genes. Promotes separation of DNA strands that contain mismatches or are modified by cisplatin. Has endonucleolytic activity and can introduce nicks or breaks into double-stranded DNA, suggesting a role in DNA repair. The secreted form acts as an extracellular mitogen and stimulates cell migration and proliferation (By similarity).</text>
</comment>
<comment type="subunit">
    <text evidence="1 2">Homodimer in the presence of ATP. Component of the coding region determinant (CRD)-mediated complex, composed of DHX9, HNRNPU, IGF2BP1, SYNCRIP and YBX1. Identified in a IGF2BP1-dependent mRNP granule complex containing untranslated mRNAs. Component of the U11/U12 snRNPs that are part of the U12-type spliceosome (By similarity). Identified in a histone pre-mRNA complex, at least composed of ERI1, LSM11, SLBP, SNRPB, SYNCRIP and YBX1 (By similarity). Interacts with IGF2BP1 and RBBP6. Component of cytoplasmic messenger ribonucleoprotein particles (mRNPs). Interacts with AKT1, MBNL1, SFRS9, SFRS12, ALYREF/THOC4, MSH2, XRCC5, WRN and NCL. Interacts (via C-terminus) with APEX1 (via N-terminus); the interaction is increased with APEX1 acetylated at 'Lys-6' and 'Lys-7'. Interacts with AGO1 and AGO2. Interacts with ANKRD2. Interacts with DERA (By similarity). Interacts with FMR1; this interaction occurs in association with polyribosome. Interacts with ZBTB7B (By similarity). Interacts with HDGF. Interacts with ELAVL1; leading to ELAVL1 recruitment on C5-methylcytosine (m5C)-containing mRNAs and subsequent mRNA stability (By similarity). Interacts with PURB (By similarity).</text>
</comment>
<comment type="subcellular location">
    <subcellularLocation>
        <location evidence="2">Cytoplasm</location>
    </subcellularLocation>
    <subcellularLocation>
        <location evidence="2">Nucleus</location>
    </subcellularLocation>
    <subcellularLocation>
        <location evidence="2">Cytoplasmic granule</location>
    </subcellularLocation>
    <subcellularLocation>
        <location evidence="2">Secreted</location>
    </subcellularLocation>
    <subcellularLocation>
        <location evidence="2">Secreted</location>
        <location evidence="2">Extracellular exosome</location>
    </subcellularLocation>
    <subcellularLocation>
        <location evidence="1">Cytoplasm</location>
        <location evidence="1">P-body</location>
    </subcellularLocation>
    <text evidence="2">Predominantly cytoplasmic in proliferating cells. Cytotoxic stress and DNA damage enhance translocation to the nucleus. Localized in cytoplasmic mRNP granules containing untranslated mRNAs. Shuttles between nucleus and cytoplasm. Localized with DDX1, MBNL1 and TIAL1 in stress granules upon stress. Secreted by mesangial and monocytic cells after inflammatory challenges.</text>
</comment>
<comment type="domain">
    <text evidence="2">In the CSD domain, Trp-63 specifically recognizes C5-methylcytosine (m5C) modification through its indole ring.</text>
</comment>
<comment type="PTM">
    <text evidence="2">Ubiquitinated by RBBP6; leading to a decrease of YBX1 transactivational ability.</text>
</comment>
<comment type="PTM">
    <text evidence="1 2 3">Phosphorylated; increased by TGFB1 treatment (By similarity). Phosphorylation by PKB/AKT1 reduces interaction with cytoplasmic mRNA (By similarity). In the absence of phosphorylation the protein is retained in the cytoplasm (By similarity).</text>
</comment>
<comment type="PTM">
    <text evidence="3">Cleaved by a 20S proteasomal protease in response to agents that damage DNA. Cleavage takes place in the absence of ubiquitination and ATP. The resulting N-terminal fragment accumulates in the nucleus (By similarity).</text>
</comment>
<comment type="similarity">
    <text evidence="6">Belongs to the YBX1 family.</text>
</comment>